<name>KITH_SHISS</name>
<proteinExistence type="inferred from homology"/>
<comment type="catalytic activity">
    <reaction evidence="1">
        <text>thymidine + ATP = dTMP + ADP + H(+)</text>
        <dbReference type="Rhea" id="RHEA:19129"/>
        <dbReference type="ChEBI" id="CHEBI:15378"/>
        <dbReference type="ChEBI" id="CHEBI:17748"/>
        <dbReference type="ChEBI" id="CHEBI:30616"/>
        <dbReference type="ChEBI" id="CHEBI:63528"/>
        <dbReference type="ChEBI" id="CHEBI:456216"/>
        <dbReference type="EC" id="2.7.1.21"/>
    </reaction>
</comment>
<comment type="subunit">
    <text evidence="1">Homotetramer.</text>
</comment>
<comment type="subcellular location">
    <subcellularLocation>
        <location evidence="1">Cytoplasm</location>
    </subcellularLocation>
</comment>
<comment type="similarity">
    <text evidence="1">Belongs to the thymidine kinase family.</text>
</comment>
<evidence type="ECO:0000255" key="1">
    <source>
        <dbReference type="HAMAP-Rule" id="MF_00124"/>
    </source>
</evidence>
<keyword id="KW-0067">ATP-binding</keyword>
<keyword id="KW-0963">Cytoplasm</keyword>
<keyword id="KW-0237">DNA synthesis</keyword>
<keyword id="KW-0418">Kinase</keyword>
<keyword id="KW-0479">Metal-binding</keyword>
<keyword id="KW-0547">Nucleotide-binding</keyword>
<keyword id="KW-1185">Reference proteome</keyword>
<keyword id="KW-0808">Transferase</keyword>
<keyword id="KW-0862">Zinc</keyword>
<sequence length="205" mass="23399">MAQLYFYYSAMNAGKSTALLQSSYNYQERGMRTVVYTAEIDDRFGAGKVSSRIGLSSPAKLFNQNSSLFDEIRAEHEQQAIHCVLVDECQFLTRQQVYELSEVVDQLDIPVLCYGLRTDFRGELFIGSQYLLAWSDKLVELKTICFCGRKASMVLRLDQAGRPYNEGEQVVIGGNERYVSVCRKHYKEALQVGSLTAIQERHRHD</sequence>
<organism>
    <name type="scientific">Shigella sonnei (strain Ss046)</name>
    <dbReference type="NCBI Taxonomy" id="300269"/>
    <lineage>
        <taxon>Bacteria</taxon>
        <taxon>Pseudomonadati</taxon>
        <taxon>Pseudomonadota</taxon>
        <taxon>Gammaproteobacteria</taxon>
        <taxon>Enterobacterales</taxon>
        <taxon>Enterobacteriaceae</taxon>
        <taxon>Shigella</taxon>
    </lineage>
</organism>
<dbReference type="EC" id="2.7.1.21" evidence="1"/>
<dbReference type="EMBL" id="CP000038">
    <property type="protein sequence ID" value="AAZ88609.1"/>
    <property type="molecule type" value="Genomic_DNA"/>
</dbReference>
<dbReference type="RefSeq" id="WP_000068079.1">
    <property type="nucleotide sequence ID" value="NC_007384.1"/>
</dbReference>
<dbReference type="SMR" id="Q3Z0V3"/>
<dbReference type="GeneID" id="93775304"/>
<dbReference type="KEGG" id="ssn:SSON_1941"/>
<dbReference type="HOGENOM" id="CLU_064400_2_1_6"/>
<dbReference type="Proteomes" id="UP000002529">
    <property type="component" value="Chromosome"/>
</dbReference>
<dbReference type="GO" id="GO:0005829">
    <property type="term" value="C:cytosol"/>
    <property type="evidence" value="ECO:0007669"/>
    <property type="project" value="TreeGrafter"/>
</dbReference>
<dbReference type="GO" id="GO:0005524">
    <property type="term" value="F:ATP binding"/>
    <property type="evidence" value="ECO:0007669"/>
    <property type="project" value="UniProtKB-UniRule"/>
</dbReference>
<dbReference type="GO" id="GO:0004797">
    <property type="term" value="F:thymidine kinase activity"/>
    <property type="evidence" value="ECO:0007669"/>
    <property type="project" value="UniProtKB-UniRule"/>
</dbReference>
<dbReference type="GO" id="GO:0008270">
    <property type="term" value="F:zinc ion binding"/>
    <property type="evidence" value="ECO:0007669"/>
    <property type="project" value="UniProtKB-UniRule"/>
</dbReference>
<dbReference type="GO" id="GO:0071897">
    <property type="term" value="P:DNA biosynthetic process"/>
    <property type="evidence" value="ECO:0007669"/>
    <property type="project" value="UniProtKB-KW"/>
</dbReference>
<dbReference type="GO" id="GO:0046104">
    <property type="term" value="P:thymidine metabolic process"/>
    <property type="evidence" value="ECO:0007669"/>
    <property type="project" value="TreeGrafter"/>
</dbReference>
<dbReference type="FunFam" id="3.30.60.20:FF:000017">
    <property type="entry name" value="Thymidine kinase"/>
    <property type="match status" value="1"/>
</dbReference>
<dbReference type="FunFam" id="3.40.50.300:FF:000323">
    <property type="entry name" value="Thymidine kinase"/>
    <property type="match status" value="1"/>
</dbReference>
<dbReference type="Gene3D" id="3.30.60.20">
    <property type="match status" value="1"/>
</dbReference>
<dbReference type="Gene3D" id="3.40.50.300">
    <property type="entry name" value="P-loop containing nucleotide triphosphate hydrolases"/>
    <property type="match status" value="1"/>
</dbReference>
<dbReference type="HAMAP" id="MF_00124">
    <property type="entry name" value="Thymidine_kinase"/>
    <property type="match status" value="1"/>
</dbReference>
<dbReference type="InterPro" id="IPR027417">
    <property type="entry name" value="P-loop_NTPase"/>
</dbReference>
<dbReference type="InterPro" id="IPR001267">
    <property type="entry name" value="Thymidine_kinase"/>
</dbReference>
<dbReference type="InterPro" id="IPR020633">
    <property type="entry name" value="Thymidine_kinase_CS"/>
</dbReference>
<dbReference type="NCBIfam" id="NF003298">
    <property type="entry name" value="PRK04296.1-3"/>
    <property type="match status" value="1"/>
</dbReference>
<dbReference type="NCBIfam" id="NF003300">
    <property type="entry name" value="PRK04296.1-5"/>
    <property type="match status" value="1"/>
</dbReference>
<dbReference type="PANTHER" id="PTHR11441">
    <property type="entry name" value="THYMIDINE KINASE"/>
    <property type="match status" value="1"/>
</dbReference>
<dbReference type="PANTHER" id="PTHR11441:SF0">
    <property type="entry name" value="THYMIDINE KINASE, CYTOSOLIC"/>
    <property type="match status" value="1"/>
</dbReference>
<dbReference type="Pfam" id="PF00265">
    <property type="entry name" value="TK"/>
    <property type="match status" value="1"/>
</dbReference>
<dbReference type="PIRSF" id="PIRSF035805">
    <property type="entry name" value="TK_cell"/>
    <property type="match status" value="1"/>
</dbReference>
<dbReference type="SUPFAM" id="SSF57716">
    <property type="entry name" value="Glucocorticoid receptor-like (DNA-binding domain)"/>
    <property type="match status" value="1"/>
</dbReference>
<dbReference type="SUPFAM" id="SSF52540">
    <property type="entry name" value="P-loop containing nucleoside triphosphate hydrolases"/>
    <property type="match status" value="1"/>
</dbReference>
<dbReference type="PROSITE" id="PS00603">
    <property type="entry name" value="TK_CELLULAR_TYPE"/>
    <property type="match status" value="1"/>
</dbReference>
<accession>Q3Z0V3</accession>
<feature type="chain" id="PRO_0000242805" description="Thymidine kinase">
    <location>
        <begin position="1"/>
        <end position="205"/>
    </location>
</feature>
<feature type="active site" description="Proton acceptor" evidence="1">
    <location>
        <position position="88"/>
    </location>
</feature>
<feature type="binding site" evidence="1">
    <location>
        <begin position="9"/>
        <end position="16"/>
    </location>
    <ligand>
        <name>ATP</name>
        <dbReference type="ChEBI" id="CHEBI:30616"/>
    </ligand>
</feature>
<feature type="binding site" evidence="1">
    <location>
        <begin position="87"/>
        <end position="90"/>
    </location>
    <ligand>
        <name>ATP</name>
        <dbReference type="ChEBI" id="CHEBI:30616"/>
    </ligand>
</feature>
<feature type="binding site" evidence="1">
    <location>
        <position position="145"/>
    </location>
    <ligand>
        <name>Zn(2+)</name>
        <dbReference type="ChEBI" id="CHEBI:29105"/>
    </ligand>
</feature>
<feature type="binding site" evidence="1">
    <location>
        <position position="147"/>
    </location>
    <ligand>
        <name>Zn(2+)</name>
        <dbReference type="ChEBI" id="CHEBI:29105"/>
    </ligand>
</feature>
<feature type="binding site" evidence="1">
    <location>
        <position position="182"/>
    </location>
    <ligand>
        <name>Zn(2+)</name>
        <dbReference type="ChEBI" id="CHEBI:29105"/>
    </ligand>
</feature>
<feature type="binding site" evidence="1">
    <location>
        <position position="185"/>
    </location>
    <ligand>
        <name>Zn(2+)</name>
        <dbReference type="ChEBI" id="CHEBI:29105"/>
    </ligand>
</feature>
<reference key="1">
    <citation type="journal article" date="2005" name="Nucleic Acids Res.">
        <title>Genome dynamics and diversity of Shigella species, the etiologic agents of bacillary dysentery.</title>
        <authorList>
            <person name="Yang F."/>
            <person name="Yang J."/>
            <person name="Zhang X."/>
            <person name="Chen L."/>
            <person name="Jiang Y."/>
            <person name="Yan Y."/>
            <person name="Tang X."/>
            <person name="Wang J."/>
            <person name="Xiong Z."/>
            <person name="Dong J."/>
            <person name="Xue Y."/>
            <person name="Zhu Y."/>
            <person name="Xu X."/>
            <person name="Sun L."/>
            <person name="Chen S."/>
            <person name="Nie H."/>
            <person name="Peng J."/>
            <person name="Xu J."/>
            <person name="Wang Y."/>
            <person name="Yuan Z."/>
            <person name="Wen Y."/>
            <person name="Yao Z."/>
            <person name="Shen Y."/>
            <person name="Qiang B."/>
            <person name="Hou Y."/>
            <person name="Yu J."/>
            <person name="Jin Q."/>
        </authorList>
    </citation>
    <scope>NUCLEOTIDE SEQUENCE [LARGE SCALE GENOMIC DNA]</scope>
    <source>
        <strain>Ss046</strain>
    </source>
</reference>
<gene>
    <name evidence="1" type="primary">tdk</name>
    <name type="ordered locus">SSON_1941</name>
</gene>
<protein>
    <recommendedName>
        <fullName evidence="1">Thymidine kinase</fullName>
        <ecNumber evidence="1">2.7.1.21</ecNumber>
    </recommendedName>
</protein>